<dbReference type="EC" id="3.4.19.12"/>
<dbReference type="EMBL" id="BX649634">
    <property type="protein sequence ID" value="CAN88027.1"/>
    <property type="molecule type" value="Genomic_DNA"/>
</dbReference>
<dbReference type="EMBL" id="BC066557">
    <property type="protein sequence ID" value="AAH66557.1"/>
    <property type="molecule type" value="mRNA"/>
</dbReference>
<dbReference type="RefSeq" id="NP_998392.1">
    <property type="nucleotide sequence ID" value="NM_213227.1"/>
</dbReference>
<dbReference type="FunCoup" id="A5PMR2">
    <property type="interactions" value="945"/>
</dbReference>
<dbReference type="STRING" id="7955.ENSDARP00000014516"/>
<dbReference type="MEROPS" id="C19.037"/>
<dbReference type="PaxDb" id="7955-ENSDARP00000014516"/>
<dbReference type="Ensembl" id="ENSDART00000018114">
    <property type="protein sequence ID" value="ENSDARP00000014516"/>
    <property type="gene ID" value="ENSDARG00000016163"/>
</dbReference>
<dbReference type="GeneID" id="406508"/>
<dbReference type="KEGG" id="dre:406508"/>
<dbReference type="AGR" id="ZFIN:ZDB-GENE-040426-2323"/>
<dbReference type="CTD" id="23032"/>
<dbReference type="ZFIN" id="ZDB-GENE-040426-2323">
    <property type="gene designation" value="usp33"/>
</dbReference>
<dbReference type="eggNOG" id="KOG1870">
    <property type="taxonomic scope" value="Eukaryota"/>
</dbReference>
<dbReference type="HOGENOM" id="CLU_004896_0_0_1"/>
<dbReference type="InParanoid" id="A5PMR2"/>
<dbReference type="OMA" id="LCSVICH"/>
<dbReference type="OrthoDB" id="73004at2759"/>
<dbReference type="PhylomeDB" id="A5PMR2"/>
<dbReference type="TreeFam" id="TF352179"/>
<dbReference type="Reactome" id="R-DRE-5689880">
    <property type="pathway name" value="Ub-specific processing proteases"/>
</dbReference>
<dbReference type="PRO" id="PR:A5PMR2"/>
<dbReference type="Proteomes" id="UP000000437">
    <property type="component" value="Chromosome 2"/>
</dbReference>
<dbReference type="Bgee" id="ENSDARG00000016163">
    <property type="expression patterns" value="Expressed in cleaving embryo and 26 other cell types or tissues"/>
</dbReference>
<dbReference type="ExpressionAtlas" id="A5PMR2">
    <property type="expression patterns" value="baseline and differential"/>
</dbReference>
<dbReference type="GO" id="GO:0005813">
    <property type="term" value="C:centrosome"/>
    <property type="evidence" value="ECO:0000250"/>
    <property type="project" value="UniProtKB"/>
</dbReference>
<dbReference type="GO" id="GO:0048471">
    <property type="term" value="C:perinuclear region of cytoplasm"/>
    <property type="evidence" value="ECO:0007669"/>
    <property type="project" value="UniProtKB-SubCell"/>
</dbReference>
<dbReference type="GO" id="GO:0004843">
    <property type="term" value="F:cysteine-type deubiquitinase activity"/>
    <property type="evidence" value="ECO:0000250"/>
    <property type="project" value="UniProtKB"/>
</dbReference>
<dbReference type="GO" id="GO:0004197">
    <property type="term" value="F:cysteine-type endopeptidase activity"/>
    <property type="evidence" value="ECO:0000250"/>
    <property type="project" value="UniProtKB"/>
</dbReference>
<dbReference type="GO" id="GO:0008270">
    <property type="term" value="F:zinc ion binding"/>
    <property type="evidence" value="ECO:0000250"/>
    <property type="project" value="UniProtKB"/>
</dbReference>
<dbReference type="GO" id="GO:0007411">
    <property type="term" value="P:axon guidance"/>
    <property type="evidence" value="ECO:0000250"/>
    <property type="project" value="UniProtKB"/>
</dbReference>
<dbReference type="GO" id="GO:0016477">
    <property type="term" value="P:cell migration"/>
    <property type="evidence" value="ECO:0000250"/>
    <property type="project" value="UniProtKB"/>
</dbReference>
<dbReference type="GO" id="GO:0051298">
    <property type="term" value="P:centrosome duplication"/>
    <property type="evidence" value="ECO:0000250"/>
    <property type="project" value="UniProtKB"/>
</dbReference>
<dbReference type="GO" id="GO:0006897">
    <property type="term" value="P:endocytosis"/>
    <property type="evidence" value="ECO:0007669"/>
    <property type="project" value="UniProtKB-KW"/>
</dbReference>
<dbReference type="GO" id="GO:0007399">
    <property type="term" value="P:nervous system development"/>
    <property type="evidence" value="ECO:0000318"/>
    <property type="project" value="GO_Central"/>
</dbReference>
<dbReference type="GO" id="GO:0016579">
    <property type="term" value="P:protein deubiquitination"/>
    <property type="evidence" value="ECO:0000250"/>
    <property type="project" value="UniProtKB"/>
</dbReference>
<dbReference type="GO" id="GO:0071108">
    <property type="term" value="P:protein K48-linked deubiquitination"/>
    <property type="evidence" value="ECO:0000250"/>
    <property type="project" value="UniProtKB"/>
</dbReference>
<dbReference type="GO" id="GO:0070536">
    <property type="term" value="P:protein K63-linked deubiquitination"/>
    <property type="evidence" value="ECO:0000250"/>
    <property type="project" value="UniProtKB"/>
</dbReference>
<dbReference type="GO" id="GO:0006508">
    <property type="term" value="P:proteolysis"/>
    <property type="evidence" value="ECO:0007669"/>
    <property type="project" value="UniProtKB-KW"/>
</dbReference>
<dbReference type="GO" id="GO:0008277">
    <property type="term" value="P:regulation of G protein-coupled receptor signaling pathway"/>
    <property type="evidence" value="ECO:0000250"/>
    <property type="project" value="UniProtKB"/>
</dbReference>
<dbReference type="CDD" id="cd02674">
    <property type="entry name" value="Peptidase_C19R"/>
    <property type="match status" value="1"/>
</dbReference>
<dbReference type="FunFam" id="3.30.2230.10:FF:000001">
    <property type="entry name" value="Ubiquitinyl hydrolase 1"/>
    <property type="match status" value="1"/>
</dbReference>
<dbReference type="FunFam" id="3.30.40.10:FF:000065">
    <property type="entry name" value="Ubiquitinyl hydrolase 1"/>
    <property type="match status" value="1"/>
</dbReference>
<dbReference type="FunFam" id="3.90.70.10:FF:000407">
    <property type="entry name" value="Ubiquitinyl hydrolase 1"/>
    <property type="match status" value="1"/>
</dbReference>
<dbReference type="Gene3D" id="3.90.70.10">
    <property type="entry name" value="Cysteine proteinases"/>
    <property type="match status" value="2"/>
</dbReference>
<dbReference type="Gene3D" id="3.30.2230.10">
    <property type="entry name" value="DUSP-like"/>
    <property type="match status" value="2"/>
</dbReference>
<dbReference type="Gene3D" id="3.30.40.10">
    <property type="entry name" value="Zinc/RING finger domain, C3HC4 (zinc finger)"/>
    <property type="match status" value="1"/>
</dbReference>
<dbReference type="InterPro" id="IPR035927">
    <property type="entry name" value="DUSP-like_sf"/>
</dbReference>
<dbReference type="InterPro" id="IPR038765">
    <property type="entry name" value="Papain-like_cys_pep_sf"/>
</dbReference>
<dbReference type="InterPro" id="IPR006615">
    <property type="entry name" value="Pept_C19_DUSP"/>
</dbReference>
<dbReference type="InterPro" id="IPR001394">
    <property type="entry name" value="Peptidase_C19_UCH"/>
</dbReference>
<dbReference type="InterPro" id="IPR050185">
    <property type="entry name" value="Ub_carboxyl-term_hydrolase"/>
</dbReference>
<dbReference type="InterPro" id="IPR018200">
    <property type="entry name" value="USP_CS"/>
</dbReference>
<dbReference type="InterPro" id="IPR028889">
    <property type="entry name" value="USP_dom"/>
</dbReference>
<dbReference type="InterPro" id="IPR013083">
    <property type="entry name" value="Znf_RING/FYVE/PHD"/>
</dbReference>
<dbReference type="InterPro" id="IPR001607">
    <property type="entry name" value="Znf_UBP"/>
</dbReference>
<dbReference type="PANTHER" id="PTHR21646">
    <property type="entry name" value="UBIQUITIN CARBOXYL-TERMINAL HYDROLASE"/>
    <property type="match status" value="1"/>
</dbReference>
<dbReference type="PANTHER" id="PTHR21646:SF32">
    <property type="entry name" value="UBIQUITIN CARBOXYL-TERMINAL HYDROLASE 33"/>
    <property type="match status" value="1"/>
</dbReference>
<dbReference type="Pfam" id="PF06337">
    <property type="entry name" value="DUSP"/>
    <property type="match status" value="2"/>
</dbReference>
<dbReference type="Pfam" id="PF00443">
    <property type="entry name" value="UCH"/>
    <property type="match status" value="1"/>
</dbReference>
<dbReference type="Pfam" id="PF02148">
    <property type="entry name" value="zf-UBP"/>
    <property type="match status" value="1"/>
</dbReference>
<dbReference type="SMART" id="SM00695">
    <property type="entry name" value="DUSP"/>
    <property type="match status" value="2"/>
</dbReference>
<dbReference type="SMART" id="SM00290">
    <property type="entry name" value="ZnF_UBP"/>
    <property type="match status" value="1"/>
</dbReference>
<dbReference type="SUPFAM" id="SSF54001">
    <property type="entry name" value="Cysteine proteinases"/>
    <property type="match status" value="1"/>
</dbReference>
<dbReference type="SUPFAM" id="SSF143791">
    <property type="entry name" value="DUSP-like"/>
    <property type="match status" value="2"/>
</dbReference>
<dbReference type="SUPFAM" id="SSF57850">
    <property type="entry name" value="RING/U-box"/>
    <property type="match status" value="1"/>
</dbReference>
<dbReference type="PROSITE" id="PS51283">
    <property type="entry name" value="DUSP"/>
    <property type="match status" value="2"/>
</dbReference>
<dbReference type="PROSITE" id="PS00972">
    <property type="entry name" value="USP_1"/>
    <property type="match status" value="1"/>
</dbReference>
<dbReference type="PROSITE" id="PS00973">
    <property type="entry name" value="USP_2"/>
    <property type="match status" value="1"/>
</dbReference>
<dbReference type="PROSITE" id="PS50235">
    <property type="entry name" value="USP_3"/>
    <property type="match status" value="1"/>
</dbReference>
<dbReference type="PROSITE" id="PS50271">
    <property type="entry name" value="ZF_UBP"/>
    <property type="match status" value="1"/>
</dbReference>
<accession>A5PMR2</accession>
<accession>Q6NYK6</accession>
<feature type="chain" id="PRO_0000390426" description="Ubiquitin carboxyl-terminal hydrolase 33">
    <location>
        <begin position="1"/>
        <end position="897"/>
    </location>
</feature>
<feature type="domain" description="USP">
    <location>
        <begin position="156"/>
        <end position="670"/>
    </location>
</feature>
<feature type="domain" description="DUSP 1" evidence="4">
    <location>
        <begin position="672"/>
        <end position="765"/>
    </location>
</feature>
<feature type="domain" description="DUSP 2" evidence="4">
    <location>
        <begin position="773"/>
        <end position="876"/>
    </location>
</feature>
<feature type="zinc finger region" description="UBP-type" evidence="3">
    <location>
        <begin position="7"/>
        <end position="110"/>
    </location>
</feature>
<feature type="region of interest" description="Disordered" evidence="7">
    <location>
        <begin position="261"/>
        <end position="308"/>
    </location>
</feature>
<feature type="region of interest" description="Disordered" evidence="7">
    <location>
        <begin position="343"/>
        <end position="420"/>
    </location>
</feature>
<feature type="region of interest" description="Disordered" evidence="7">
    <location>
        <begin position="875"/>
        <end position="897"/>
    </location>
</feature>
<feature type="compositionally biased region" description="Polar residues" evidence="7">
    <location>
        <begin position="287"/>
        <end position="297"/>
    </location>
</feature>
<feature type="compositionally biased region" description="Basic and acidic residues" evidence="7">
    <location>
        <begin position="299"/>
        <end position="308"/>
    </location>
</feature>
<feature type="compositionally biased region" description="Basic and acidic residues" evidence="7">
    <location>
        <begin position="344"/>
        <end position="353"/>
    </location>
</feature>
<feature type="compositionally biased region" description="Polar residues" evidence="7">
    <location>
        <begin position="355"/>
        <end position="396"/>
    </location>
</feature>
<feature type="compositionally biased region" description="Low complexity" evidence="7">
    <location>
        <begin position="398"/>
        <end position="411"/>
    </location>
</feature>
<feature type="compositionally biased region" description="Low complexity" evidence="7">
    <location>
        <begin position="875"/>
        <end position="884"/>
    </location>
</feature>
<feature type="compositionally biased region" description="Basic and acidic residues" evidence="7">
    <location>
        <begin position="886"/>
        <end position="897"/>
    </location>
</feature>
<feature type="active site" description="Nucleophile" evidence="5 6">
    <location>
        <position position="165"/>
    </location>
</feature>
<feature type="active site" description="Proton acceptor" evidence="5 6">
    <location>
        <position position="628"/>
    </location>
</feature>
<feature type="binding site" evidence="3">
    <location>
        <position position="9"/>
    </location>
    <ligand>
        <name>Zn(2+)</name>
        <dbReference type="ChEBI" id="CHEBI:29105"/>
        <label>1</label>
    </ligand>
</feature>
<feature type="binding site" evidence="3">
    <location>
        <position position="11"/>
    </location>
    <ligand>
        <name>Zn(2+)</name>
        <dbReference type="ChEBI" id="CHEBI:29105"/>
        <label>1</label>
    </ligand>
</feature>
<feature type="binding site" evidence="3">
    <location>
        <position position="31"/>
    </location>
    <ligand>
        <name>Zn(2+)</name>
        <dbReference type="ChEBI" id="CHEBI:29105"/>
        <label>2</label>
    </ligand>
</feature>
<feature type="binding site" evidence="3">
    <location>
        <position position="34"/>
    </location>
    <ligand>
        <name>Zn(2+)</name>
        <dbReference type="ChEBI" id="CHEBI:29105"/>
        <label>2</label>
    </ligand>
</feature>
<feature type="binding site" evidence="3">
    <location>
        <position position="44"/>
    </location>
    <ligand>
        <name>Zn(2+)</name>
        <dbReference type="ChEBI" id="CHEBI:29105"/>
        <label>3</label>
    </ligand>
</feature>
<feature type="binding site" evidence="3">
    <location>
        <position position="49"/>
    </location>
    <ligand>
        <name>Zn(2+)</name>
        <dbReference type="ChEBI" id="CHEBI:29105"/>
        <label>3</label>
    </ligand>
</feature>
<feature type="binding site" evidence="3">
    <location>
        <position position="54"/>
    </location>
    <ligand>
        <name>Zn(2+)</name>
        <dbReference type="ChEBI" id="CHEBI:29105"/>
        <label>2</label>
    </ligand>
</feature>
<feature type="binding site" evidence="3">
    <location>
        <position position="61"/>
    </location>
    <ligand>
        <name>Zn(2+)</name>
        <dbReference type="ChEBI" id="CHEBI:29105"/>
        <label>2</label>
    </ligand>
</feature>
<feature type="binding site" evidence="3">
    <location>
        <position position="65"/>
    </location>
    <ligand>
        <name>Zn(2+)</name>
        <dbReference type="ChEBI" id="CHEBI:29105"/>
        <label>3</label>
    </ligand>
</feature>
<feature type="binding site" evidence="3">
    <location>
        <position position="71"/>
    </location>
    <ligand>
        <name>Zn(2+)</name>
        <dbReference type="ChEBI" id="CHEBI:29105"/>
        <label>3</label>
    </ligand>
</feature>
<feature type="binding site" evidence="3">
    <location>
        <position position="84"/>
    </location>
    <ligand>
        <name>Zn(2+)</name>
        <dbReference type="ChEBI" id="CHEBI:29105"/>
        <label>1</label>
    </ligand>
</feature>
<feature type="binding site" evidence="3">
    <location>
        <position position="87"/>
    </location>
    <ligand>
        <name>Zn(2+)</name>
        <dbReference type="ChEBI" id="CHEBI:29105"/>
        <label>1</label>
    </ligand>
</feature>
<feature type="sequence conflict" description="In Ref. 2; AAH66557." evidence="8" ref="2">
    <original>I</original>
    <variation>V</variation>
    <location>
        <position position="207"/>
    </location>
</feature>
<feature type="sequence conflict" description="In Ref. 2; AAH66557." evidence="8" ref="2">
    <original>A</original>
    <variation>S</variation>
    <location>
        <position position="217"/>
    </location>
</feature>
<feature type="sequence conflict" description="In Ref. 2; AAH66557." evidence="8" ref="2">
    <original>A</original>
    <variation>T</variation>
    <location>
        <position position="732"/>
    </location>
</feature>
<keyword id="KW-0963">Cytoplasm</keyword>
<keyword id="KW-0206">Cytoskeleton</keyword>
<keyword id="KW-0254">Endocytosis</keyword>
<keyword id="KW-0378">Hydrolase</keyword>
<keyword id="KW-0479">Metal-binding</keyword>
<keyword id="KW-0645">Protease</keyword>
<keyword id="KW-1185">Reference proteome</keyword>
<keyword id="KW-0677">Repeat</keyword>
<keyword id="KW-0788">Thiol protease</keyword>
<keyword id="KW-0833">Ubl conjugation pathway</keyword>
<keyword id="KW-0862">Zinc</keyword>
<keyword id="KW-0863">Zinc-finger</keyword>
<organism>
    <name type="scientific">Danio rerio</name>
    <name type="common">Zebrafish</name>
    <name type="synonym">Brachydanio rerio</name>
    <dbReference type="NCBI Taxonomy" id="7955"/>
    <lineage>
        <taxon>Eukaryota</taxon>
        <taxon>Metazoa</taxon>
        <taxon>Chordata</taxon>
        <taxon>Craniata</taxon>
        <taxon>Vertebrata</taxon>
        <taxon>Euteleostomi</taxon>
        <taxon>Actinopterygii</taxon>
        <taxon>Neopterygii</taxon>
        <taxon>Teleostei</taxon>
        <taxon>Ostariophysi</taxon>
        <taxon>Cypriniformes</taxon>
        <taxon>Danionidae</taxon>
        <taxon>Danioninae</taxon>
        <taxon>Danio</taxon>
    </lineage>
</organism>
<name>UBP33_DANRE</name>
<comment type="function">
    <text evidence="1">Deubiquitinating enzyme involved in various processes such as centrosome duplication, cellular migration and beta-2 adrenergic receptor/ADRB2 recycling. Involved in regulation of centrosome duplication by mediating deubiquitination of ccp110 in S and G2/M phase, leading to stabilize ccp110 during the period which centrioles duplicate and elongate. Involved in cell migration via its interaction with intracellular domain of robo1, leading to regulate the Slit signaling. Plays a role in commissural axon guidance cross the ventral midline of the neural tube in a Slit-dependent manner, possibly by mediating the deubiquitination of robo1. Acts as a regulator of G-protein coupled receptor (GPCR) signaling by mediating the deubiquitination of beta-arrestins (arrb1 and arrb2) and beta-2 adrenergic receptor (adrb2). Deubiquitinates dio2, thereby regulating thyroid hormone regulation. Mediates deubiquitination of both 'Lys-48'- and 'Lys-63'-linked polyubiquitin chains (By similarity).</text>
</comment>
<comment type="catalytic activity">
    <reaction>
        <text>Thiol-dependent hydrolysis of ester, thioester, amide, peptide and isopeptide bonds formed by the C-terminal Gly of ubiquitin (a 76-residue protein attached to proteins as an intracellular targeting signal).</text>
        <dbReference type="EC" id="3.4.19.12"/>
    </reaction>
</comment>
<comment type="subcellular location">
    <subcellularLocation>
        <location evidence="2">Cytoplasm</location>
        <location evidence="2">Perinuclear region</location>
    </subcellularLocation>
    <subcellularLocation>
        <location evidence="2">Cytoplasm</location>
        <location evidence="2">Cytoskeleton</location>
        <location evidence="2">Microtubule organizing center</location>
        <location evidence="2">Centrosome</location>
    </subcellularLocation>
    <text evidence="2">Associates with centrosomes predominantly in S and G2 phases but less in G1 phase (By similarity).</text>
</comment>
<comment type="domain">
    <text evidence="1">The UBP-type zinc finger binds 3 zinc ions. However, it does not bind ubiquitin, probably because the conserved Arg in position 55 is replaced by a Glu residue (By similarity).</text>
</comment>
<comment type="similarity">
    <text evidence="8">Belongs to the peptidase C19 family. USP20/USP33 subfamily.</text>
</comment>
<gene>
    <name type="primary">usp33</name>
    <name type="ORF">ch211-284g18.1</name>
</gene>
<reference key="1">
    <citation type="journal article" date="2013" name="Nature">
        <title>The zebrafish reference genome sequence and its relationship to the human genome.</title>
        <authorList>
            <person name="Howe K."/>
            <person name="Clark M.D."/>
            <person name="Torroja C.F."/>
            <person name="Torrance J."/>
            <person name="Berthelot C."/>
            <person name="Muffato M."/>
            <person name="Collins J.E."/>
            <person name="Humphray S."/>
            <person name="McLaren K."/>
            <person name="Matthews L."/>
            <person name="McLaren S."/>
            <person name="Sealy I."/>
            <person name="Caccamo M."/>
            <person name="Churcher C."/>
            <person name="Scott C."/>
            <person name="Barrett J.C."/>
            <person name="Koch R."/>
            <person name="Rauch G.J."/>
            <person name="White S."/>
            <person name="Chow W."/>
            <person name="Kilian B."/>
            <person name="Quintais L.T."/>
            <person name="Guerra-Assuncao J.A."/>
            <person name="Zhou Y."/>
            <person name="Gu Y."/>
            <person name="Yen J."/>
            <person name="Vogel J.H."/>
            <person name="Eyre T."/>
            <person name="Redmond S."/>
            <person name="Banerjee R."/>
            <person name="Chi J."/>
            <person name="Fu B."/>
            <person name="Langley E."/>
            <person name="Maguire S.F."/>
            <person name="Laird G.K."/>
            <person name="Lloyd D."/>
            <person name="Kenyon E."/>
            <person name="Donaldson S."/>
            <person name="Sehra H."/>
            <person name="Almeida-King J."/>
            <person name="Loveland J."/>
            <person name="Trevanion S."/>
            <person name="Jones M."/>
            <person name="Quail M."/>
            <person name="Willey D."/>
            <person name="Hunt A."/>
            <person name="Burton J."/>
            <person name="Sims S."/>
            <person name="McLay K."/>
            <person name="Plumb B."/>
            <person name="Davis J."/>
            <person name="Clee C."/>
            <person name="Oliver K."/>
            <person name="Clark R."/>
            <person name="Riddle C."/>
            <person name="Elliot D."/>
            <person name="Threadgold G."/>
            <person name="Harden G."/>
            <person name="Ware D."/>
            <person name="Begum S."/>
            <person name="Mortimore B."/>
            <person name="Kerry G."/>
            <person name="Heath P."/>
            <person name="Phillimore B."/>
            <person name="Tracey A."/>
            <person name="Corby N."/>
            <person name="Dunn M."/>
            <person name="Johnson C."/>
            <person name="Wood J."/>
            <person name="Clark S."/>
            <person name="Pelan S."/>
            <person name="Griffiths G."/>
            <person name="Smith M."/>
            <person name="Glithero R."/>
            <person name="Howden P."/>
            <person name="Barker N."/>
            <person name="Lloyd C."/>
            <person name="Stevens C."/>
            <person name="Harley J."/>
            <person name="Holt K."/>
            <person name="Panagiotidis G."/>
            <person name="Lovell J."/>
            <person name="Beasley H."/>
            <person name="Henderson C."/>
            <person name="Gordon D."/>
            <person name="Auger K."/>
            <person name="Wright D."/>
            <person name="Collins J."/>
            <person name="Raisen C."/>
            <person name="Dyer L."/>
            <person name="Leung K."/>
            <person name="Robertson L."/>
            <person name="Ambridge K."/>
            <person name="Leongamornlert D."/>
            <person name="McGuire S."/>
            <person name="Gilderthorp R."/>
            <person name="Griffiths C."/>
            <person name="Manthravadi D."/>
            <person name="Nichol S."/>
            <person name="Barker G."/>
            <person name="Whitehead S."/>
            <person name="Kay M."/>
            <person name="Brown J."/>
            <person name="Murnane C."/>
            <person name="Gray E."/>
            <person name="Humphries M."/>
            <person name="Sycamore N."/>
            <person name="Barker D."/>
            <person name="Saunders D."/>
            <person name="Wallis J."/>
            <person name="Babbage A."/>
            <person name="Hammond S."/>
            <person name="Mashreghi-Mohammadi M."/>
            <person name="Barr L."/>
            <person name="Martin S."/>
            <person name="Wray P."/>
            <person name="Ellington A."/>
            <person name="Matthews N."/>
            <person name="Ellwood M."/>
            <person name="Woodmansey R."/>
            <person name="Clark G."/>
            <person name="Cooper J."/>
            <person name="Tromans A."/>
            <person name="Grafham D."/>
            <person name="Skuce C."/>
            <person name="Pandian R."/>
            <person name="Andrews R."/>
            <person name="Harrison E."/>
            <person name="Kimberley A."/>
            <person name="Garnett J."/>
            <person name="Fosker N."/>
            <person name="Hall R."/>
            <person name="Garner P."/>
            <person name="Kelly D."/>
            <person name="Bird C."/>
            <person name="Palmer S."/>
            <person name="Gehring I."/>
            <person name="Berger A."/>
            <person name="Dooley C.M."/>
            <person name="Ersan-Urun Z."/>
            <person name="Eser C."/>
            <person name="Geiger H."/>
            <person name="Geisler M."/>
            <person name="Karotki L."/>
            <person name="Kirn A."/>
            <person name="Konantz J."/>
            <person name="Konantz M."/>
            <person name="Oberlander M."/>
            <person name="Rudolph-Geiger S."/>
            <person name="Teucke M."/>
            <person name="Lanz C."/>
            <person name="Raddatz G."/>
            <person name="Osoegawa K."/>
            <person name="Zhu B."/>
            <person name="Rapp A."/>
            <person name="Widaa S."/>
            <person name="Langford C."/>
            <person name="Yang F."/>
            <person name="Schuster S.C."/>
            <person name="Carter N.P."/>
            <person name="Harrow J."/>
            <person name="Ning Z."/>
            <person name="Herrero J."/>
            <person name="Searle S.M."/>
            <person name="Enright A."/>
            <person name="Geisler R."/>
            <person name="Plasterk R.H."/>
            <person name="Lee C."/>
            <person name="Westerfield M."/>
            <person name="de Jong P.J."/>
            <person name="Zon L.I."/>
            <person name="Postlethwait J.H."/>
            <person name="Nusslein-Volhard C."/>
            <person name="Hubbard T.J."/>
            <person name="Roest Crollius H."/>
            <person name="Rogers J."/>
            <person name="Stemple D.L."/>
        </authorList>
    </citation>
    <scope>NUCLEOTIDE SEQUENCE [LARGE SCALE GENOMIC DNA]</scope>
    <source>
        <strain>Tuebingen</strain>
    </source>
</reference>
<reference key="2">
    <citation type="submission" date="2004-02" db="EMBL/GenBank/DDBJ databases">
        <authorList>
            <consortium name="NIH - Zebrafish Gene Collection (ZGC) project"/>
        </authorList>
    </citation>
    <scope>NUCLEOTIDE SEQUENCE [LARGE SCALE MRNA]</scope>
    <source>
        <tissue>Embryo</tissue>
    </source>
</reference>
<proteinExistence type="evidence at transcript level"/>
<sequence>MSGVSSNDCPHLECVGEITKEELIQKSHGQCQDCKVGGPNLWACLENGCSYVGCGESHADHSTVHSQETRHNLTVNLTTLRVWCYACTKEVFLERKLGPHKQLPNAAKAVSPVQTPCQDLNTPGSPTSLRVPSAGTCDDLDMETEEEDELRTRGLTGLKNIGNTCYMNAALQALSNCPPLTQFFLECGGLVKTDKKPALCKSYQKLITDLWHKNRNAYVVPTNLFQGIKAVNPMFRGYSQQDSQEFLRCLMDQLHEELKELIPEPEDPNQAVAMDDSPDEDNHSQSDDFQSCESCGSSDRADNEGPRVPEDINEAEMLMPEQNQNNRDWQKEKNLINNLYRAGSHGDLDKDVDTTSDSRPIISSQGAIKAQGRTSDSEIQVSSTVRPQSPTGNEGITSRLSSSPPKSSAWPNLSSTHKKVPMFTPTKTKRQRKYHSIISEVFDGTIVSSVQCLTCDRVSVTLENFQDISLPIPGKEDLAKLHSSSHQTALVKAGSCGEAYAPQGWIAFVMEYIKSWFWGPVVTLQDCLAAFFARDELKGDNMYSCEKCKKLRNGVKFCKVQSLPEILCIHLKRFRHELMFSTKIGTHVSFPLEGLEMQPFLAKDSSALTTTYDLLSVICHHGTASSGHYIAYCRNELNQLWYEFDDQSVTEVSESCVQNAEAYVLFYKKSNDETQKERRKVTSLFNMMEPSLLQFYVSRQWLNKFKTFAEPGPISNHDFLCAHGGIPPNKAAYIDDLVLMIPQNVWDHLYSRYGGGPAVNHLYVCHTCQNEIEKLEKRRKNELDMFVRLNKAFQEEESPVVIYCISMQWFREWESFVKGKDIDPPGPIDNSKIAVNKNGHITLKPGADSGQISEETWNFLHNIHGGGPVVTVRPSVSHQESETSQSEEKIEVETRTV</sequence>
<protein>
    <recommendedName>
        <fullName>Ubiquitin carboxyl-terminal hydrolase 33</fullName>
        <ecNumber>3.4.19.12</ecNumber>
    </recommendedName>
    <alternativeName>
        <fullName>Deubiquitinating enzyme 33</fullName>
    </alternativeName>
    <alternativeName>
        <fullName>Ubiquitin thioesterase 33</fullName>
    </alternativeName>
    <alternativeName>
        <fullName>Ubiquitin-specific-processing protease 33</fullName>
    </alternativeName>
</protein>
<evidence type="ECO:0000250" key="1"/>
<evidence type="ECO:0000250" key="2">
    <source>
        <dbReference type="UniProtKB" id="Q8TEY7"/>
    </source>
</evidence>
<evidence type="ECO:0000255" key="3">
    <source>
        <dbReference type="PROSITE-ProRule" id="PRU00502"/>
    </source>
</evidence>
<evidence type="ECO:0000255" key="4">
    <source>
        <dbReference type="PROSITE-ProRule" id="PRU00613"/>
    </source>
</evidence>
<evidence type="ECO:0000255" key="5">
    <source>
        <dbReference type="PROSITE-ProRule" id="PRU10092"/>
    </source>
</evidence>
<evidence type="ECO:0000255" key="6">
    <source>
        <dbReference type="PROSITE-ProRule" id="PRU10093"/>
    </source>
</evidence>
<evidence type="ECO:0000256" key="7">
    <source>
        <dbReference type="SAM" id="MobiDB-lite"/>
    </source>
</evidence>
<evidence type="ECO:0000305" key="8"/>